<organism>
    <name type="scientific">Panthera leo</name>
    <name type="common">Lion</name>
    <dbReference type="NCBI Taxonomy" id="9689"/>
    <lineage>
        <taxon>Eukaryota</taxon>
        <taxon>Metazoa</taxon>
        <taxon>Chordata</taxon>
        <taxon>Craniata</taxon>
        <taxon>Vertebrata</taxon>
        <taxon>Euteleostomi</taxon>
        <taxon>Mammalia</taxon>
        <taxon>Eutheria</taxon>
        <taxon>Laurasiatheria</taxon>
        <taxon>Carnivora</taxon>
        <taxon>Feliformia</taxon>
        <taxon>Felidae</taxon>
        <taxon>Pantherinae</taxon>
        <taxon>Panthera</taxon>
    </lineage>
</organism>
<name>IPSG_PANLE</name>
<evidence type="ECO:0000255" key="1">
    <source>
        <dbReference type="PROSITE-ProRule" id="PRU00798"/>
    </source>
</evidence>
<proteinExistence type="evidence at protein level"/>
<dbReference type="PIR" id="B29654">
    <property type="entry name" value="B29654"/>
</dbReference>
<dbReference type="SMR" id="P08481"/>
<dbReference type="MEROPS" id="I01.016"/>
<dbReference type="MEROPS" id="I01.017"/>
<dbReference type="Proteomes" id="UP000694399">
    <property type="component" value="Unplaced"/>
</dbReference>
<dbReference type="GO" id="GO:0005576">
    <property type="term" value="C:extracellular region"/>
    <property type="evidence" value="ECO:0007669"/>
    <property type="project" value="UniProtKB-SubCell"/>
</dbReference>
<dbReference type="GO" id="GO:0004867">
    <property type="term" value="F:serine-type endopeptidase inhibitor activity"/>
    <property type="evidence" value="ECO:0007669"/>
    <property type="project" value="UniProtKB-KW"/>
</dbReference>
<dbReference type="CDD" id="cd00104">
    <property type="entry name" value="KAZAL_FS"/>
    <property type="match status" value="1"/>
</dbReference>
<dbReference type="FunFam" id="3.30.60.30:FF:000037">
    <property type="entry name" value="Ovomucoid"/>
    <property type="match status" value="1"/>
</dbReference>
<dbReference type="Gene3D" id="3.30.60.30">
    <property type="match status" value="2"/>
</dbReference>
<dbReference type="InterPro" id="IPR051597">
    <property type="entry name" value="Bifunctional_prot_inhibitor"/>
</dbReference>
<dbReference type="InterPro" id="IPR002350">
    <property type="entry name" value="Kazal_dom"/>
</dbReference>
<dbReference type="InterPro" id="IPR036058">
    <property type="entry name" value="Kazal_dom_sf"/>
</dbReference>
<dbReference type="InterPro" id="IPR001239">
    <property type="entry name" value="Prot_inh_Kazal-m"/>
</dbReference>
<dbReference type="PANTHER" id="PTHR47729:SF1">
    <property type="entry name" value="OVOMUCOID-LIKE-RELATED"/>
    <property type="match status" value="1"/>
</dbReference>
<dbReference type="PANTHER" id="PTHR47729">
    <property type="entry name" value="SERINE PEPTIDASE INHIBITOR, KAZAL TYPE 2, TANDEM DUPLICATE 1-RELATED"/>
    <property type="match status" value="1"/>
</dbReference>
<dbReference type="Pfam" id="PF00050">
    <property type="entry name" value="Kazal_1"/>
    <property type="match status" value="2"/>
</dbReference>
<dbReference type="PRINTS" id="PR00290">
    <property type="entry name" value="KAZALINHBTR"/>
</dbReference>
<dbReference type="SMART" id="SM00280">
    <property type="entry name" value="KAZAL"/>
    <property type="match status" value="2"/>
</dbReference>
<dbReference type="SUPFAM" id="SSF100895">
    <property type="entry name" value="Kazal-type serine protease inhibitors"/>
    <property type="match status" value="2"/>
</dbReference>
<dbReference type="PROSITE" id="PS00282">
    <property type="entry name" value="KAZAL_1"/>
    <property type="match status" value="2"/>
</dbReference>
<dbReference type="PROSITE" id="PS51465">
    <property type="entry name" value="KAZAL_2"/>
    <property type="match status" value="2"/>
</dbReference>
<reference key="1">
    <citation type="journal article" date="1987" name="Biol. Chem. Hoppe-Seyler">
        <title>The amino-acid sequences of the double-headed proteinase inhibitors from cat, lion and dog submandibular glands.</title>
        <authorList>
            <person name="Reisinger P.W.M."/>
            <person name="Hochstrasser K."/>
            <person name="Gottlicher I."/>
            <person name="Eulitz M."/>
            <person name="Wachter E."/>
        </authorList>
    </citation>
    <scope>PROTEIN SEQUENCE</scope>
    <source>
        <tissue>Submandibular gland</tissue>
    </source>
</reference>
<accession>P08481</accession>
<sequence>ASPPEVNCSQYNRKGSGIACSKQLKPICGIDHKTYSNECMFCLLNQNKQFQIRKLYDDKCQIECTNYSAICTMEYFPLCGSDGKVYSNKCSFCNEVVKRRGTLFLAKYGQCK</sequence>
<keyword id="KW-0903">Direct protein sequencing</keyword>
<keyword id="KW-1015">Disulfide bond</keyword>
<keyword id="KW-0646">Protease inhibitor</keyword>
<keyword id="KW-1185">Reference proteome</keyword>
<keyword id="KW-0677">Repeat</keyword>
<keyword id="KW-0964">Secreted</keyword>
<keyword id="KW-0722">Serine protease inhibitor</keyword>
<feature type="chain" id="PRO_0000073040" description="Double-headed protease inhibitor, submandibular gland">
    <location>
        <begin position="1"/>
        <end position="112"/>
    </location>
</feature>
<feature type="domain" description="Kazal-like 1" evidence="1">
    <location>
        <begin position="2"/>
        <end position="62"/>
    </location>
</feature>
<feature type="domain" description="Kazal-like 2" evidence="1">
    <location>
        <begin position="63"/>
        <end position="112"/>
    </location>
</feature>
<feature type="site" description="Reactive bond 1 for trypsin">
    <location>
        <begin position="22"/>
        <end position="23"/>
    </location>
</feature>
<feature type="site" description="Reactive bond 2 for elastase">
    <location>
        <begin position="73"/>
        <end position="74"/>
    </location>
</feature>
<feature type="disulfide bond" evidence="1">
    <location>
        <begin position="8"/>
        <end position="42"/>
    </location>
</feature>
<feature type="disulfide bond" evidence="1">
    <location>
        <begin position="20"/>
        <end position="39"/>
    </location>
</feature>
<feature type="disulfide bond" evidence="1">
    <location>
        <begin position="28"/>
        <end position="60"/>
    </location>
</feature>
<feature type="disulfide bond" evidence="1">
    <location>
        <begin position="64"/>
        <end position="93"/>
    </location>
</feature>
<feature type="disulfide bond" evidence="1">
    <location>
        <begin position="71"/>
        <end position="90"/>
    </location>
</feature>
<feature type="disulfide bond" evidence="1">
    <location>
        <begin position="79"/>
        <end position="111"/>
    </location>
</feature>
<protein>
    <recommendedName>
        <fullName>Double-headed protease inhibitor, submandibular gland</fullName>
    </recommendedName>
</protein>
<comment type="function">
    <text>This inhibitor is composed of two homologous actively inhibiting halves: one which inhibits trypsin, the other which inhibits elastase.</text>
</comment>
<comment type="subcellular location">
    <subcellularLocation>
        <location>Secreted</location>
    </subcellularLocation>
</comment>